<proteinExistence type="evidence at protein level"/>
<gene>
    <name evidence="1" type="primary">L4</name>
</gene>
<dbReference type="EMBL" id="X73487">
    <property type="protein sequence ID" value="CAA51895.1"/>
    <property type="molecule type" value="Genomic_DNA"/>
</dbReference>
<dbReference type="PIR" id="S33946">
    <property type="entry name" value="S33946"/>
</dbReference>
<dbReference type="RefSeq" id="NP_040928.1">
    <property type="nucleotide sequence ID" value="NC_001460.1"/>
</dbReference>
<dbReference type="SMR" id="P36713"/>
<dbReference type="DNASU" id="1460842"/>
<dbReference type="GeneID" id="1460842"/>
<dbReference type="Proteomes" id="UP000004993">
    <property type="component" value="Genome"/>
</dbReference>
<dbReference type="GO" id="GO:0042025">
    <property type="term" value="C:host cell nucleus"/>
    <property type="evidence" value="ECO:0007669"/>
    <property type="project" value="UniProtKB-SubCell"/>
</dbReference>
<dbReference type="GO" id="GO:0019028">
    <property type="term" value="C:viral capsid"/>
    <property type="evidence" value="ECO:0007669"/>
    <property type="project" value="UniProtKB-UniRule"/>
</dbReference>
<dbReference type="GO" id="GO:0031423">
    <property type="term" value="F:hexon binding"/>
    <property type="evidence" value="ECO:0007669"/>
    <property type="project" value="InterPro"/>
</dbReference>
<dbReference type="Gene3D" id="6.10.250.1460">
    <property type="match status" value="1"/>
</dbReference>
<dbReference type="HAMAP" id="MF_04049">
    <property type="entry name" value="ADV_CAP8"/>
    <property type="match status" value="1"/>
</dbReference>
<dbReference type="InterPro" id="IPR000646">
    <property type="entry name" value="Adeno_PVIII"/>
</dbReference>
<dbReference type="Pfam" id="PF01310">
    <property type="entry name" value="Adeno_PVIII"/>
    <property type="match status" value="1"/>
</dbReference>
<organismHost>
    <name type="scientific">Homo sapiens</name>
    <name type="common">Human</name>
    <dbReference type="NCBI Taxonomy" id="9606"/>
</organismHost>
<accession>P36713</accession>
<evidence type="ECO:0000255" key="1">
    <source>
        <dbReference type="HAMAP-Rule" id="MF_04049"/>
    </source>
</evidence>
<evidence type="ECO:0000305" key="2"/>
<protein>
    <recommendedName>
        <fullName evidence="1">Pre-hexon-linking protein VIII</fullName>
    </recommendedName>
    <alternativeName>
        <fullName evidence="1">Pre-protein VIII</fullName>
        <shortName evidence="1">pVIII</shortName>
    </alternativeName>
    <component>
        <recommendedName>
            <fullName evidence="1">Hexon-linking protein-N</fullName>
        </recommendedName>
        <alternativeName>
            <fullName evidence="1">12.1 kDa protein VIII</fullName>
        </alternativeName>
        <alternativeName>
            <fullName evidence="1">Protein VIII-N</fullName>
        </alternativeName>
    </component>
    <component>
        <recommendedName>
            <fullName evidence="1">Hexon-linking protein-C</fullName>
        </recommendedName>
        <alternativeName>
            <fullName evidence="1">7.6 kDa protein VIII</fullName>
        </alternativeName>
        <alternativeName>
            <fullName evidence="1">Protein VIII-C</fullName>
        </alternativeName>
    </component>
</protein>
<sequence>MSKDIPTPYMWSFQPQMGLAAGAAQDYSSKMNWLSAGPHMISRVNGVRARRNQILLEQAALTATPRNQLNPPSWPAALIYQENPPPTTVLLPRDAQAEVHMTNAGAQLAGGARHSFRYKGRTEPYPSPAIKRVLIRGKGIQLNDEVTSPLGVRPDGVFQLGGSGRSSFTARQAYLTLQSSSSAPRSGGIGTLQFVEEFTPSVYFNPFSGSPGHYPDAFIPNFDAVSESVDGYD</sequence>
<reference key="1">
    <citation type="journal article" date="1994" name="J. Virol.">
        <title>Nucleotide sequence of human adenovirus type 12 DNA: comparative functional analysis.</title>
        <authorList>
            <person name="Sprengel J."/>
            <person name="Schmitz B."/>
            <person name="Heuss-Neitzel D."/>
            <person name="Zock C."/>
            <person name="Doerfler W."/>
        </authorList>
    </citation>
    <scope>NUCLEOTIDE SEQUENCE [LARGE SCALE GENOMIC DNA]</scope>
</reference>
<reference key="2">
    <citation type="journal article" date="1993" name="Virology">
        <title>Human adenovirus serotype 12 virion precursors pMu and pVI are cleaved at amino-terminal and carboxy-terminal sites that conform to the adenovirus 2 endoproteinase cleavage consensus sequence.</title>
        <authorList>
            <person name="Freimuth P."/>
            <person name="Anderson C.W."/>
        </authorList>
    </citation>
    <scope>PROTEIN SEQUENCE OF 139-155 AND 164-178</scope>
    <source>
        <strain>Huie</strain>
    </source>
</reference>
<name>CAP8_ADE12</name>
<comment type="function">
    <molecule>Hexon-linking protein-N</molecule>
    <text evidence="1">Structural component of the virion that acts as a cement protein on the capsid interior and which glue the peripentonal hexons and group-of-nine hexons together.</text>
</comment>
<comment type="function">
    <molecule>Hexon-linking protein-C</molecule>
    <text evidence="1">Structural component of the virion that acts as a cement protein on the capsid interior and which glue the peripentonal hexons and group-of-nine hexons together.</text>
</comment>
<comment type="subunit">
    <text evidence="1">Interacts with the peripentonal hexons as well as the hexons in the facets. Part of a complex composed of the core-capsid bridging protein, the endosome lysis protein VI and the hexon-linking protein VIII; these interactions bridge the virus core to the capsid.</text>
</comment>
<comment type="subcellular location">
    <molecule>Hexon-linking protein-C</molecule>
    <subcellularLocation>
        <location evidence="1">Virion</location>
    </subcellularLocation>
    <text evidence="1">Located on the inner side of the capsid shell. Present in 120 copies per virion.</text>
</comment>
<comment type="subcellular location">
    <molecule>Pre-hexon-linking protein VIII</molecule>
    <subcellularLocation>
        <location evidence="1">Host nucleus</location>
    </subcellularLocation>
</comment>
<comment type="subcellular location">
    <molecule>Hexon-linking protein-N</molecule>
    <subcellularLocation>
        <location evidence="1">Virion</location>
    </subcellularLocation>
    <text evidence="1">Located on the inner side of the capsid shell. Present in 120 copies per virion.</text>
</comment>
<comment type="induction">
    <text evidence="1">Expressed in the late phase of the viral replicative cycle.</text>
</comment>
<comment type="PTM">
    <text evidence="1">Cleaved by the viral protease during virion maturation. May cause the middle segment to be shed from the capsid.</text>
</comment>
<comment type="miscellaneous">
    <text evidence="1">All late proteins expressed from the major late promoter are produced by alternative splicing and alternative polyadenylation of the same gene giving rise to non-overlapping ORFs. A leader sequence is present in the N-terminus of all these mRNAs and is recognized by the viral shutoff protein to provide expression although conventional translation via ribosome scanning from the cap has been shut off in the host cell.</text>
</comment>
<comment type="similarity">
    <text evidence="1 2">Belongs to the adenoviridae hexon-linking protein family.</text>
</comment>
<keyword id="KW-0167">Capsid protein</keyword>
<keyword id="KW-0903">Direct protein sequencing</keyword>
<keyword id="KW-1048">Host nucleus</keyword>
<keyword id="KW-0426">Late protein</keyword>
<keyword id="KW-0597">Phosphoprotein</keyword>
<keyword id="KW-1185">Reference proteome</keyword>
<keyword id="KW-0946">Virion</keyword>
<organism>
    <name type="scientific">Human adenovirus A serotype 12</name>
    <name type="common">HAdV-12</name>
    <name type="synonym">Human adenovirus 12</name>
    <dbReference type="NCBI Taxonomy" id="28282"/>
    <lineage>
        <taxon>Viruses</taxon>
        <taxon>Varidnaviria</taxon>
        <taxon>Bamfordvirae</taxon>
        <taxon>Preplasmiviricota</taxon>
        <taxon>Tectiliviricetes</taxon>
        <taxon>Rowavirales</taxon>
        <taxon>Adenoviridae</taxon>
        <taxon>Mastadenovirus</taxon>
        <taxon>Human mastadenovirus A</taxon>
    </lineage>
</organism>
<feature type="chain" id="PRO_0000421397" description="Pre-hexon-linking protein VIII" evidence="1">
    <location>
        <begin position="1"/>
        <end position="233"/>
    </location>
</feature>
<feature type="peptide" id="PRO_0000421398" description="Hexon-linking protein-N" evidence="1">
    <location>
        <begin position="1"/>
        <end position="111"/>
    </location>
</feature>
<feature type="propeptide" id="PRO_0000036497" evidence="1">
    <location>
        <begin position="112"/>
        <end position="163"/>
    </location>
</feature>
<feature type="peptide" id="PRO_0000036498" description="Hexon-linking protein-C" evidence="1 2">
    <location>
        <begin position="164"/>
        <end position="233"/>
    </location>
</feature>
<feature type="site" description="Cleavage; by viral protease" evidence="1">
    <location>
        <begin position="111"/>
        <end position="112"/>
    </location>
</feature>
<feature type="site" description="Cleavage; by viral protease" evidence="1">
    <location>
        <begin position="163"/>
        <end position="164"/>
    </location>
</feature>
<feature type="modified residue" description="Phosphothreonine; by host" evidence="1">
    <location>
        <position position="64"/>
    </location>
</feature>
<feature type="modified residue" description="Phosphoserine; by host" evidence="1">
    <location>
        <position position="180"/>
    </location>
</feature>